<name>MTX1_BOVIN</name>
<sequence length="317" mass="35674">MAAPMELFCWSGGWGLPSVDLDSLAVLTYARFTGAPLKVHKITNPWRSPSGTLPALRTSHGEVISVPHRIITHLRKEKYNADYDLSARQGADTLAFMSLLEEKLLPVLKHTFWIDAKNYVEVTRKWYAEAMPFPLNFFLPGRMQRQYMERLQLLCGEHRPEDEEELEKELYQEAQECLTLLSQRLGSQKFFFGDAPASLDAFVFSYLALLQQAKLPSGKLQAHLRGLHNLCAYCAHILSLYFPWEGAKAPPPRQTPANPETEEEPYRRRNQILTVLAGLAAMAGYALLSGIVSIQRAPSARAPGTQALGMAEEDEEE</sequence>
<evidence type="ECO:0000250" key="1"/>
<evidence type="ECO:0000250" key="2">
    <source>
        <dbReference type="UniProtKB" id="Q13505"/>
    </source>
</evidence>
<evidence type="ECO:0000255" key="3"/>
<evidence type="ECO:0000305" key="4"/>
<dbReference type="EMBL" id="BC109736">
    <property type="protein sequence ID" value="AAI09737.1"/>
    <property type="molecule type" value="mRNA"/>
</dbReference>
<dbReference type="RefSeq" id="NP_001035698.1">
    <property type="nucleotide sequence ID" value="NM_001040608.2"/>
</dbReference>
<dbReference type="SMR" id="Q2TBS1"/>
<dbReference type="FunCoup" id="Q2TBS1">
    <property type="interactions" value="2025"/>
</dbReference>
<dbReference type="STRING" id="9913.ENSBTAP00000061957"/>
<dbReference type="PaxDb" id="9913-ENSBTAP00000019763"/>
<dbReference type="GeneID" id="664655"/>
<dbReference type="KEGG" id="bta:664655"/>
<dbReference type="CTD" id="4580"/>
<dbReference type="eggNOG" id="KOG3028">
    <property type="taxonomic scope" value="Eukaryota"/>
</dbReference>
<dbReference type="InParanoid" id="Q2TBS1"/>
<dbReference type="OrthoDB" id="5835136at2759"/>
<dbReference type="Proteomes" id="UP000009136">
    <property type="component" value="Unplaced"/>
</dbReference>
<dbReference type="GO" id="GO:0005737">
    <property type="term" value="C:cytoplasm"/>
    <property type="evidence" value="ECO:0000318"/>
    <property type="project" value="GO_Central"/>
</dbReference>
<dbReference type="GO" id="GO:0001401">
    <property type="term" value="C:SAM complex"/>
    <property type="evidence" value="ECO:0000318"/>
    <property type="project" value="GO_Central"/>
</dbReference>
<dbReference type="GO" id="GO:0007005">
    <property type="term" value="P:mitochondrion organization"/>
    <property type="evidence" value="ECO:0000318"/>
    <property type="project" value="GO_Central"/>
</dbReference>
<dbReference type="GO" id="GO:0015031">
    <property type="term" value="P:protein transport"/>
    <property type="evidence" value="ECO:0007669"/>
    <property type="project" value="UniProtKB-KW"/>
</dbReference>
<dbReference type="CDD" id="cd03212">
    <property type="entry name" value="GST_C_Metaxin1_3"/>
    <property type="match status" value="1"/>
</dbReference>
<dbReference type="CDD" id="cd03078">
    <property type="entry name" value="GST_N_Metaxin1_like"/>
    <property type="match status" value="1"/>
</dbReference>
<dbReference type="FunFam" id="1.20.1050.10:FF:000058">
    <property type="entry name" value="metaxin-1"/>
    <property type="match status" value="1"/>
</dbReference>
<dbReference type="Gene3D" id="1.20.1050.10">
    <property type="match status" value="1"/>
</dbReference>
<dbReference type="InterPro" id="IPR036282">
    <property type="entry name" value="Glutathione-S-Trfase_C_sf"/>
</dbReference>
<dbReference type="InterPro" id="IPR040079">
    <property type="entry name" value="Glutathione_S-Trfase"/>
</dbReference>
<dbReference type="InterPro" id="IPR017410">
    <property type="entry name" value="Metaxin1/3"/>
</dbReference>
<dbReference type="InterPro" id="IPR033468">
    <property type="entry name" value="Metaxin_GST"/>
</dbReference>
<dbReference type="InterPro" id="IPR050931">
    <property type="entry name" value="Mito_Protein_Transport_Metaxin"/>
</dbReference>
<dbReference type="InterPro" id="IPR019564">
    <property type="entry name" value="Sam37/metaxin_N"/>
</dbReference>
<dbReference type="PANTHER" id="PTHR12289">
    <property type="entry name" value="METAXIN RELATED"/>
    <property type="match status" value="1"/>
</dbReference>
<dbReference type="PANTHER" id="PTHR12289:SF34">
    <property type="entry name" value="METAXIN-1"/>
    <property type="match status" value="1"/>
</dbReference>
<dbReference type="Pfam" id="PF17171">
    <property type="entry name" value="GST_C_6"/>
    <property type="match status" value="1"/>
</dbReference>
<dbReference type="Pfam" id="PF10568">
    <property type="entry name" value="Tom37"/>
    <property type="match status" value="1"/>
</dbReference>
<dbReference type="PIRSF" id="PIRSF038150">
    <property type="entry name" value="Metaxin"/>
    <property type="match status" value="1"/>
</dbReference>
<dbReference type="SFLD" id="SFLDS00019">
    <property type="entry name" value="Glutathione_Transferase_(cytos"/>
    <property type="match status" value="1"/>
</dbReference>
<dbReference type="SFLD" id="SFLDG01180">
    <property type="entry name" value="SUF1"/>
    <property type="match status" value="1"/>
</dbReference>
<dbReference type="SUPFAM" id="SSF47616">
    <property type="entry name" value="GST C-terminal domain-like"/>
    <property type="match status" value="1"/>
</dbReference>
<feature type="chain" id="PRO_0000320055" description="Metaxin-1">
    <location>
        <begin position="1"/>
        <end position="317"/>
    </location>
</feature>
<feature type="transmembrane region" description="Helical" evidence="3">
    <location>
        <begin position="164"/>
        <end position="184"/>
    </location>
</feature>
<feature type="cross-link" description="Glycyl lysine isopeptide (Lys-Gly) (interchain with G-Cter in ubiquitin)" evidence="2">
    <location>
        <position position="38"/>
    </location>
</feature>
<feature type="cross-link" description="Glycyl lysine isopeptide (Lys-Gly) (interchain with G-Cter in ubiquitin)" evidence="2">
    <location>
        <position position="41"/>
    </location>
</feature>
<feature type="cross-link" description="Glycyl lysine isopeptide (Lys-Gly) (interchain with G-Cter in ubiquitin)" evidence="2">
    <location>
        <position position="78"/>
    </location>
</feature>
<protein>
    <recommendedName>
        <fullName>Metaxin-1</fullName>
    </recommendedName>
    <alternativeName>
        <fullName>Mitochondrial outer membrane import complex protein 1</fullName>
    </alternativeName>
</protein>
<accession>Q2TBS1</accession>
<reference key="1">
    <citation type="submission" date="2005-11" db="EMBL/GenBank/DDBJ databases">
        <authorList>
            <consortium name="NIH - Mammalian Gene Collection (MGC) project"/>
        </authorList>
    </citation>
    <scope>NUCLEOTIDE SEQUENCE [LARGE SCALE MRNA]</scope>
    <source>
        <strain>Crossbred X Angus</strain>
        <tissue>Liver</tissue>
    </source>
</reference>
<gene>
    <name type="primary">MTX1</name>
</gene>
<proteinExistence type="evidence at transcript level"/>
<organism>
    <name type="scientific">Bos taurus</name>
    <name type="common">Bovine</name>
    <dbReference type="NCBI Taxonomy" id="9913"/>
    <lineage>
        <taxon>Eukaryota</taxon>
        <taxon>Metazoa</taxon>
        <taxon>Chordata</taxon>
        <taxon>Craniata</taxon>
        <taxon>Vertebrata</taxon>
        <taxon>Euteleostomi</taxon>
        <taxon>Mammalia</taxon>
        <taxon>Eutheria</taxon>
        <taxon>Laurasiatheria</taxon>
        <taxon>Artiodactyla</taxon>
        <taxon>Ruminantia</taxon>
        <taxon>Pecora</taxon>
        <taxon>Bovidae</taxon>
        <taxon>Bovinae</taxon>
        <taxon>Bos</taxon>
    </lineage>
</organism>
<comment type="function">
    <text evidence="1">Involved in transport of proteins into the mitochondrion. Essential for embryonic development (By similarity).</text>
</comment>
<comment type="subunit">
    <text evidence="2">Interacts with MTX2/metaxin-2 (By similarity). Associates with the mitochondrial contact site and cristae organizing system (MICOS) complex, composed of at least MICOS10/MIC10, CHCHD3/MIC19, CHCHD6/MIC25, APOOL/MIC27, IMMT/MIC60, APOO/MIC23/MIC26 and QIL1/MIC13 (By similarity). This complex was also known under the names MINOS or MitOS complex (By similarity). The MICOS complex associates with mitochondrial outer membrane proteins SAMM50, MTX1 and MTX2 (together described as components of the mitochondrial outer membrane sorting assembly machinery (SAM) complex) and DNAJC11, mitochondrial inner membrane protein TMEM11 and with HSPA9 (By similarity). The MICOS and SAM complexes together with DNAJC11 are part of a large protein complex spanning both membranes termed the mitochondrial intermembrane space bridging (MIB) complex (By similarity). Interacts with ARMC1 (By similarity).</text>
</comment>
<comment type="subcellular location">
    <subcellularLocation>
        <location evidence="1">Mitochondrion outer membrane</location>
    </subcellularLocation>
</comment>
<comment type="PTM">
    <text evidence="2">Ubiquitinated by PRKN during mitophagy, leading to its degradation and enhancement of mitophagy. Deubiquitinated by USP30.</text>
</comment>
<comment type="similarity">
    <text evidence="4">Belongs to the metaxin family.</text>
</comment>
<keyword id="KW-1017">Isopeptide bond</keyword>
<keyword id="KW-0472">Membrane</keyword>
<keyword id="KW-0496">Mitochondrion</keyword>
<keyword id="KW-1000">Mitochondrion outer membrane</keyword>
<keyword id="KW-0653">Protein transport</keyword>
<keyword id="KW-1185">Reference proteome</keyword>
<keyword id="KW-0812">Transmembrane</keyword>
<keyword id="KW-1133">Transmembrane helix</keyword>
<keyword id="KW-0813">Transport</keyword>
<keyword id="KW-0832">Ubl conjugation</keyword>